<reference key="1">
    <citation type="submission" date="2007-03" db="EMBL/GenBank/DDBJ databases">
        <authorList>
            <person name="Heidelberg J."/>
        </authorList>
    </citation>
    <scope>NUCLEOTIDE SEQUENCE [LARGE SCALE GENOMIC DNA]</scope>
    <source>
        <strain>ATCC 39541 / Classical Ogawa 395 / O395</strain>
    </source>
</reference>
<reference key="2">
    <citation type="journal article" date="2008" name="PLoS ONE">
        <title>A recalibrated molecular clock and independent origins for the cholera pandemic clones.</title>
        <authorList>
            <person name="Feng L."/>
            <person name="Reeves P.R."/>
            <person name="Lan R."/>
            <person name="Ren Y."/>
            <person name="Gao C."/>
            <person name="Zhou Z."/>
            <person name="Ren Y."/>
            <person name="Cheng J."/>
            <person name="Wang W."/>
            <person name="Wang J."/>
            <person name="Qian W."/>
            <person name="Li D."/>
            <person name="Wang L."/>
        </authorList>
    </citation>
    <scope>NUCLEOTIDE SEQUENCE [LARGE SCALE GENOMIC DNA]</scope>
    <source>
        <strain>ATCC 39541 / Classical Ogawa 395 / O395</strain>
    </source>
</reference>
<accession>A5F3I4</accession>
<accession>C3M4H8</accession>
<keyword id="KW-0028">Amino-acid biosynthesis</keyword>
<keyword id="KW-0198">Cysteine biosynthesis</keyword>
<keyword id="KW-0249">Electron transport</keyword>
<keyword id="KW-0274">FAD</keyword>
<keyword id="KW-0285">Flavoprotein</keyword>
<keyword id="KW-0288">FMN</keyword>
<keyword id="KW-0521">NADP</keyword>
<keyword id="KW-0560">Oxidoreductase</keyword>
<keyword id="KW-0813">Transport</keyword>
<organism>
    <name type="scientific">Vibrio cholerae serotype O1 (strain ATCC 39541 / Classical Ogawa 395 / O395)</name>
    <dbReference type="NCBI Taxonomy" id="345073"/>
    <lineage>
        <taxon>Bacteria</taxon>
        <taxon>Pseudomonadati</taxon>
        <taxon>Pseudomonadota</taxon>
        <taxon>Gammaproteobacteria</taxon>
        <taxon>Vibrionales</taxon>
        <taxon>Vibrionaceae</taxon>
        <taxon>Vibrio</taxon>
    </lineage>
</organism>
<dbReference type="EC" id="1.8.1.2" evidence="1"/>
<dbReference type="EMBL" id="CP000627">
    <property type="protein sequence ID" value="ABQ21838.1"/>
    <property type="molecule type" value="Genomic_DNA"/>
</dbReference>
<dbReference type="EMBL" id="CP001235">
    <property type="protein sequence ID" value="ACP08450.1"/>
    <property type="molecule type" value="Genomic_DNA"/>
</dbReference>
<dbReference type="SMR" id="A5F3I4"/>
<dbReference type="KEGG" id="vco:VC0395_A2795"/>
<dbReference type="KEGG" id="vcr:VC395_0428"/>
<dbReference type="PATRIC" id="fig|345073.21.peg.415"/>
<dbReference type="eggNOG" id="COG0369">
    <property type="taxonomic scope" value="Bacteria"/>
</dbReference>
<dbReference type="HOGENOM" id="CLU_001570_17_7_6"/>
<dbReference type="OrthoDB" id="9816402at2"/>
<dbReference type="UniPathway" id="UPA00140">
    <property type="reaction ID" value="UER00207"/>
</dbReference>
<dbReference type="Proteomes" id="UP000000249">
    <property type="component" value="Chromosome 2"/>
</dbReference>
<dbReference type="GO" id="GO:0005829">
    <property type="term" value="C:cytosol"/>
    <property type="evidence" value="ECO:0007669"/>
    <property type="project" value="TreeGrafter"/>
</dbReference>
<dbReference type="GO" id="GO:0050660">
    <property type="term" value="F:flavin adenine dinucleotide binding"/>
    <property type="evidence" value="ECO:0007669"/>
    <property type="project" value="InterPro"/>
</dbReference>
<dbReference type="GO" id="GO:0010181">
    <property type="term" value="F:FMN binding"/>
    <property type="evidence" value="ECO:0007669"/>
    <property type="project" value="InterPro"/>
</dbReference>
<dbReference type="GO" id="GO:0004783">
    <property type="term" value="F:sulfite reductase (NADPH) activity"/>
    <property type="evidence" value="ECO:0007669"/>
    <property type="project" value="UniProtKB-UniRule"/>
</dbReference>
<dbReference type="GO" id="GO:0019344">
    <property type="term" value="P:cysteine biosynthetic process"/>
    <property type="evidence" value="ECO:0007669"/>
    <property type="project" value="UniProtKB-KW"/>
</dbReference>
<dbReference type="GO" id="GO:0070814">
    <property type="term" value="P:hydrogen sulfide biosynthetic process"/>
    <property type="evidence" value="ECO:0007669"/>
    <property type="project" value="UniProtKB-UniRule"/>
</dbReference>
<dbReference type="GO" id="GO:0000103">
    <property type="term" value="P:sulfate assimilation"/>
    <property type="evidence" value="ECO:0007669"/>
    <property type="project" value="UniProtKB-UniRule"/>
</dbReference>
<dbReference type="CDD" id="cd06199">
    <property type="entry name" value="SiR"/>
    <property type="match status" value="1"/>
</dbReference>
<dbReference type="FunFam" id="3.40.50.80:FF:000001">
    <property type="entry name" value="NADPH--cytochrome P450 reductase 1"/>
    <property type="match status" value="1"/>
</dbReference>
<dbReference type="FunFam" id="3.40.50.360:FF:000018">
    <property type="entry name" value="Sulfite reductase [NADPH] flavoprotein alpha-component"/>
    <property type="match status" value="1"/>
</dbReference>
<dbReference type="Gene3D" id="3.40.50.360">
    <property type="match status" value="1"/>
</dbReference>
<dbReference type="Gene3D" id="1.20.990.10">
    <property type="entry name" value="NADPH-cytochrome p450 Reductase, Chain A, domain 3"/>
    <property type="match status" value="1"/>
</dbReference>
<dbReference type="Gene3D" id="3.40.50.80">
    <property type="entry name" value="Nucleotide-binding domain of ferredoxin-NADP reductase (FNR) module"/>
    <property type="match status" value="1"/>
</dbReference>
<dbReference type="Gene3D" id="2.40.30.10">
    <property type="entry name" value="Translation factors"/>
    <property type="match status" value="1"/>
</dbReference>
<dbReference type="HAMAP" id="MF_01541">
    <property type="entry name" value="CysJ"/>
    <property type="match status" value="1"/>
</dbReference>
<dbReference type="InterPro" id="IPR010199">
    <property type="entry name" value="CysJ"/>
</dbReference>
<dbReference type="InterPro" id="IPR003097">
    <property type="entry name" value="CysJ-like_FAD-binding"/>
</dbReference>
<dbReference type="InterPro" id="IPR029758">
    <property type="entry name" value="CysJ_Proteobact"/>
</dbReference>
<dbReference type="InterPro" id="IPR017927">
    <property type="entry name" value="FAD-bd_FR_type"/>
</dbReference>
<dbReference type="InterPro" id="IPR001094">
    <property type="entry name" value="Flavdoxin-like"/>
</dbReference>
<dbReference type="InterPro" id="IPR008254">
    <property type="entry name" value="Flavodoxin/NO_synth"/>
</dbReference>
<dbReference type="InterPro" id="IPR001709">
    <property type="entry name" value="Flavoprot_Pyr_Nucl_cyt_Rdtase"/>
</dbReference>
<dbReference type="InterPro" id="IPR029039">
    <property type="entry name" value="Flavoprotein-like_sf"/>
</dbReference>
<dbReference type="InterPro" id="IPR039261">
    <property type="entry name" value="FNR_nucleotide-bd"/>
</dbReference>
<dbReference type="InterPro" id="IPR023173">
    <property type="entry name" value="NADPH_Cyt_P450_Rdtase_alpha"/>
</dbReference>
<dbReference type="InterPro" id="IPR001433">
    <property type="entry name" value="OxRdtase_FAD/NAD-bd"/>
</dbReference>
<dbReference type="InterPro" id="IPR017938">
    <property type="entry name" value="Riboflavin_synthase-like_b-brl"/>
</dbReference>
<dbReference type="NCBIfam" id="TIGR01931">
    <property type="entry name" value="cysJ"/>
    <property type="match status" value="1"/>
</dbReference>
<dbReference type="NCBIfam" id="NF008197">
    <property type="entry name" value="PRK10953.1"/>
    <property type="match status" value="1"/>
</dbReference>
<dbReference type="PANTHER" id="PTHR19384:SF128">
    <property type="entry name" value="NADPH OXIDOREDUCTASE A"/>
    <property type="match status" value="1"/>
</dbReference>
<dbReference type="PANTHER" id="PTHR19384">
    <property type="entry name" value="NITRIC OXIDE SYNTHASE-RELATED"/>
    <property type="match status" value="1"/>
</dbReference>
<dbReference type="Pfam" id="PF00667">
    <property type="entry name" value="FAD_binding_1"/>
    <property type="match status" value="1"/>
</dbReference>
<dbReference type="Pfam" id="PF00258">
    <property type="entry name" value="Flavodoxin_1"/>
    <property type="match status" value="1"/>
</dbReference>
<dbReference type="Pfam" id="PF00175">
    <property type="entry name" value="NAD_binding_1"/>
    <property type="match status" value="1"/>
</dbReference>
<dbReference type="PIRSF" id="PIRSF000207">
    <property type="entry name" value="SiR-FP_CysJ"/>
    <property type="match status" value="1"/>
</dbReference>
<dbReference type="PRINTS" id="PR00369">
    <property type="entry name" value="FLAVODOXIN"/>
</dbReference>
<dbReference type="PRINTS" id="PR00371">
    <property type="entry name" value="FPNCR"/>
</dbReference>
<dbReference type="SUPFAM" id="SSF52343">
    <property type="entry name" value="Ferredoxin reductase-like, C-terminal NADP-linked domain"/>
    <property type="match status" value="1"/>
</dbReference>
<dbReference type="SUPFAM" id="SSF52218">
    <property type="entry name" value="Flavoproteins"/>
    <property type="match status" value="1"/>
</dbReference>
<dbReference type="SUPFAM" id="SSF63380">
    <property type="entry name" value="Riboflavin synthase domain-like"/>
    <property type="match status" value="1"/>
</dbReference>
<dbReference type="PROSITE" id="PS51384">
    <property type="entry name" value="FAD_FR"/>
    <property type="match status" value="1"/>
</dbReference>
<dbReference type="PROSITE" id="PS50902">
    <property type="entry name" value="FLAVODOXIN_LIKE"/>
    <property type="match status" value="1"/>
</dbReference>
<name>CYSJ_VIBC3</name>
<proteinExistence type="inferred from homology"/>
<gene>
    <name evidence="1" type="primary">cysJ</name>
    <name type="ordered locus">VC0395_A2795</name>
    <name type="ordered locus">VC395_0428</name>
</gene>
<feature type="chain" id="PRO_1000087642" description="Sulfite reductase [NADPH] flavoprotein alpha-component">
    <location>
        <begin position="1"/>
        <end position="614"/>
    </location>
</feature>
<feature type="domain" description="Flavodoxin-like" evidence="1">
    <location>
        <begin position="79"/>
        <end position="217"/>
    </location>
</feature>
<feature type="domain" description="FAD-binding FR-type" evidence="1">
    <location>
        <begin position="249"/>
        <end position="463"/>
    </location>
</feature>
<feature type="binding site" evidence="1">
    <location>
        <begin position="85"/>
        <end position="90"/>
    </location>
    <ligand>
        <name>FMN</name>
        <dbReference type="ChEBI" id="CHEBI:58210"/>
    </ligand>
</feature>
<feature type="binding site" evidence="1">
    <location>
        <begin position="132"/>
        <end position="135"/>
    </location>
    <ligand>
        <name>FMN</name>
        <dbReference type="ChEBI" id="CHEBI:58210"/>
    </ligand>
</feature>
<feature type="binding site" evidence="1">
    <location>
        <begin position="168"/>
        <end position="177"/>
    </location>
    <ligand>
        <name>FMN</name>
        <dbReference type="ChEBI" id="CHEBI:58210"/>
    </ligand>
</feature>
<feature type="binding site" evidence="1">
    <location>
        <position position="337"/>
    </location>
    <ligand>
        <name>FAD</name>
        <dbReference type="ChEBI" id="CHEBI:57692"/>
    </ligand>
</feature>
<feature type="binding site" evidence="1">
    <location>
        <position position="371"/>
    </location>
    <ligand>
        <name>FAD</name>
        <dbReference type="ChEBI" id="CHEBI:57692"/>
    </ligand>
</feature>
<feature type="binding site" evidence="1">
    <location>
        <begin position="401"/>
        <end position="404"/>
    </location>
    <ligand>
        <name>FAD</name>
        <dbReference type="ChEBI" id="CHEBI:57692"/>
    </ligand>
</feature>
<feature type="binding site" evidence="1">
    <location>
        <begin position="419"/>
        <end position="421"/>
    </location>
    <ligand>
        <name>FAD</name>
        <dbReference type="ChEBI" id="CHEBI:57692"/>
    </ligand>
</feature>
<feature type="binding site" evidence="1">
    <location>
        <position position="425"/>
    </location>
    <ligand>
        <name>FAD</name>
        <dbReference type="ChEBI" id="CHEBI:57692"/>
    </ligand>
</feature>
<feature type="binding site" evidence="1">
    <location>
        <begin position="434"/>
        <end position="437"/>
    </location>
    <ligand>
        <name>FAD</name>
        <dbReference type="ChEBI" id="CHEBI:57692"/>
    </ligand>
</feature>
<feature type="binding site" evidence="1">
    <location>
        <begin position="534"/>
        <end position="535"/>
    </location>
    <ligand>
        <name>NADP(+)</name>
        <dbReference type="ChEBI" id="CHEBI:58349"/>
    </ligand>
</feature>
<feature type="binding site" evidence="1">
    <location>
        <begin position="540"/>
        <end position="544"/>
    </location>
    <ligand>
        <name>NADP(+)</name>
        <dbReference type="ChEBI" id="CHEBI:58349"/>
    </ligand>
</feature>
<feature type="binding site" evidence="1">
    <location>
        <position position="576"/>
    </location>
    <ligand>
        <name>NADP(+)</name>
        <dbReference type="ChEBI" id="CHEBI:58349"/>
    </ligand>
</feature>
<feature type="binding site" evidence="1">
    <location>
        <position position="614"/>
    </location>
    <ligand>
        <name>FAD</name>
        <dbReference type="ChEBI" id="CHEBI:57692"/>
    </ligand>
</feature>
<protein>
    <recommendedName>
        <fullName evidence="1">Sulfite reductase [NADPH] flavoprotein alpha-component</fullName>
        <shortName evidence="1">SiR-FP</shortName>
        <ecNumber evidence="1">1.8.1.2</ecNumber>
    </recommendedName>
</protein>
<evidence type="ECO:0000255" key="1">
    <source>
        <dbReference type="HAMAP-Rule" id="MF_01541"/>
    </source>
</evidence>
<comment type="function">
    <text evidence="1">Component of the sulfite reductase complex that catalyzes the 6-electron reduction of sulfite to sulfide. This is one of several activities required for the biosynthesis of L-cysteine from sulfate. The flavoprotein component catalyzes the electron flow from NADPH -&gt; FAD -&gt; FMN to the hemoprotein component.</text>
</comment>
<comment type="catalytic activity">
    <reaction evidence="1">
        <text>hydrogen sulfide + 3 NADP(+) + 3 H2O = sulfite + 3 NADPH + 4 H(+)</text>
        <dbReference type="Rhea" id="RHEA:13801"/>
        <dbReference type="ChEBI" id="CHEBI:15377"/>
        <dbReference type="ChEBI" id="CHEBI:15378"/>
        <dbReference type="ChEBI" id="CHEBI:17359"/>
        <dbReference type="ChEBI" id="CHEBI:29919"/>
        <dbReference type="ChEBI" id="CHEBI:57783"/>
        <dbReference type="ChEBI" id="CHEBI:58349"/>
        <dbReference type="EC" id="1.8.1.2"/>
    </reaction>
</comment>
<comment type="cofactor">
    <cofactor evidence="1">
        <name>FAD</name>
        <dbReference type="ChEBI" id="CHEBI:57692"/>
    </cofactor>
    <text evidence="1">Binds 1 FAD per subunit.</text>
</comment>
<comment type="cofactor">
    <cofactor evidence="1">
        <name>FMN</name>
        <dbReference type="ChEBI" id="CHEBI:58210"/>
    </cofactor>
    <text evidence="1">Binds 1 FMN per subunit.</text>
</comment>
<comment type="pathway">
    <text evidence="1">Sulfur metabolism; hydrogen sulfide biosynthesis; hydrogen sulfide from sulfite (NADPH route): step 1/1.</text>
</comment>
<comment type="subunit">
    <text evidence="1">Alpha(8)-beta(8). The alpha component is a flavoprotein, the beta component is a hemoprotein.</text>
</comment>
<comment type="similarity">
    <text evidence="1">Belongs to the NADPH-dependent sulphite reductase flavoprotein subunit CysJ family.</text>
</comment>
<comment type="similarity">
    <text evidence="1">In the N-terminal section; belongs to the flavodoxin family.</text>
</comment>
<comment type="similarity">
    <text evidence="1">In the C-terminal section; belongs to the flavoprotein pyridine nucleotide cytochrome reductase family.</text>
</comment>
<sequence length="614" mass="67687">MNREVVTMSTGNTLPPALAALASPLNDAQLNQLQQTVTQLNAQQLAWVSGYFWGLSQSNALSVPHISAGQTASAASGKLTIIFASQTGNAKGVAQALLKEAQAAGIQAQLFDASDYKGKDLAKETHVIFVASTNGEGEAPDNALALHEFLKSKKAPKLPNLKYGVLGLGDSSYQFFCQTGKDFDQFLENLGAQRLVERLDADVDYQAAATEWRKQVLSILKDELTGAAAVTSVATFAVSQTAESHYSKEQPYTASLSTSQKITGRDSGKDVRHIEIDLADSGITYQPGDALGVWYENRPQLVNALLDSVGLSGHEEVQVDGETLSLHSALTHHYEITAANPQLVAQFAELAQSEKLTSLAQDKEALREYATRTQVIDVLREEKVTLSAIQLLSLLRRLTPRLYSIASSQSEVGEEVHLTVGVVEYEYKGEQRLGGASSFLAHQLEEGAPVKVFVEHNNNFKLPSDDNAPLIMVGPGTGIAPFRSFIQERENRGAAGKNWLLFGDRTFTQDFLYQVEWQKYLKSGVLNRLDVAFSRDQHEKVYVQHRLLDQAELVWQWLQEGAYFYVCGDASRMAKDVHQALITVVEQQGGLNREQAEEYVSELRKAKRYQRDVY</sequence>